<gene>
    <name evidence="1" type="primary">atpB</name>
    <name type="ordered locus">swp_5162</name>
</gene>
<accession>B8CVV1</accession>
<evidence type="ECO:0000255" key="1">
    <source>
        <dbReference type="HAMAP-Rule" id="MF_01393"/>
    </source>
</evidence>
<reference key="1">
    <citation type="journal article" date="2008" name="PLoS ONE">
        <title>Environmental adaptation: genomic analysis of the piezotolerant and psychrotolerant deep-sea iron reducing bacterium Shewanella piezotolerans WP3.</title>
        <authorList>
            <person name="Wang F."/>
            <person name="Wang J."/>
            <person name="Jian H."/>
            <person name="Zhang B."/>
            <person name="Li S."/>
            <person name="Wang F."/>
            <person name="Zeng X."/>
            <person name="Gao L."/>
            <person name="Bartlett D.H."/>
            <person name="Yu J."/>
            <person name="Hu S."/>
            <person name="Xiao X."/>
        </authorList>
    </citation>
    <scope>NUCLEOTIDE SEQUENCE [LARGE SCALE GENOMIC DNA]</scope>
    <source>
        <strain>WP3 / JCM 13877</strain>
    </source>
</reference>
<name>ATP6_SHEPW</name>
<keyword id="KW-0066">ATP synthesis</keyword>
<keyword id="KW-0997">Cell inner membrane</keyword>
<keyword id="KW-1003">Cell membrane</keyword>
<keyword id="KW-0138">CF(0)</keyword>
<keyword id="KW-0375">Hydrogen ion transport</keyword>
<keyword id="KW-0406">Ion transport</keyword>
<keyword id="KW-0472">Membrane</keyword>
<keyword id="KW-0812">Transmembrane</keyword>
<keyword id="KW-1133">Transmembrane helix</keyword>
<keyword id="KW-0813">Transport</keyword>
<dbReference type="EMBL" id="CP000472">
    <property type="protein sequence ID" value="ACJ31777.1"/>
    <property type="molecule type" value="Genomic_DNA"/>
</dbReference>
<dbReference type="RefSeq" id="WP_020915100.1">
    <property type="nucleotide sequence ID" value="NC_011566.1"/>
</dbReference>
<dbReference type="SMR" id="B8CVV1"/>
<dbReference type="STRING" id="225849.swp_5162"/>
<dbReference type="KEGG" id="swp:swp_5162"/>
<dbReference type="eggNOG" id="COG0356">
    <property type="taxonomic scope" value="Bacteria"/>
</dbReference>
<dbReference type="HOGENOM" id="CLU_041018_1_0_6"/>
<dbReference type="OrthoDB" id="9789241at2"/>
<dbReference type="Proteomes" id="UP000000753">
    <property type="component" value="Chromosome"/>
</dbReference>
<dbReference type="GO" id="GO:0005886">
    <property type="term" value="C:plasma membrane"/>
    <property type="evidence" value="ECO:0007669"/>
    <property type="project" value="UniProtKB-SubCell"/>
</dbReference>
<dbReference type="GO" id="GO:0045259">
    <property type="term" value="C:proton-transporting ATP synthase complex"/>
    <property type="evidence" value="ECO:0007669"/>
    <property type="project" value="UniProtKB-KW"/>
</dbReference>
<dbReference type="GO" id="GO:0046933">
    <property type="term" value="F:proton-transporting ATP synthase activity, rotational mechanism"/>
    <property type="evidence" value="ECO:0007669"/>
    <property type="project" value="UniProtKB-UniRule"/>
</dbReference>
<dbReference type="GO" id="GO:0042777">
    <property type="term" value="P:proton motive force-driven plasma membrane ATP synthesis"/>
    <property type="evidence" value="ECO:0007669"/>
    <property type="project" value="TreeGrafter"/>
</dbReference>
<dbReference type="CDD" id="cd00310">
    <property type="entry name" value="ATP-synt_Fo_a_6"/>
    <property type="match status" value="1"/>
</dbReference>
<dbReference type="FunFam" id="1.20.120.220:FF:000002">
    <property type="entry name" value="ATP synthase subunit a"/>
    <property type="match status" value="1"/>
</dbReference>
<dbReference type="Gene3D" id="1.20.120.220">
    <property type="entry name" value="ATP synthase, F0 complex, subunit A"/>
    <property type="match status" value="1"/>
</dbReference>
<dbReference type="HAMAP" id="MF_01393">
    <property type="entry name" value="ATP_synth_a_bact"/>
    <property type="match status" value="1"/>
</dbReference>
<dbReference type="InterPro" id="IPR045082">
    <property type="entry name" value="ATP_syn_F0_a_bact/chloroplast"/>
</dbReference>
<dbReference type="InterPro" id="IPR000568">
    <property type="entry name" value="ATP_synth_F0_asu"/>
</dbReference>
<dbReference type="InterPro" id="IPR023011">
    <property type="entry name" value="ATP_synth_F0_asu_AS"/>
</dbReference>
<dbReference type="InterPro" id="IPR035908">
    <property type="entry name" value="F0_ATP_A_sf"/>
</dbReference>
<dbReference type="NCBIfam" id="TIGR01131">
    <property type="entry name" value="ATP_synt_6_or_A"/>
    <property type="match status" value="1"/>
</dbReference>
<dbReference type="NCBIfam" id="NF004477">
    <property type="entry name" value="PRK05815.1-1"/>
    <property type="match status" value="1"/>
</dbReference>
<dbReference type="PANTHER" id="PTHR42823">
    <property type="entry name" value="ATP SYNTHASE SUBUNIT A, CHLOROPLASTIC"/>
    <property type="match status" value="1"/>
</dbReference>
<dbReference type="PANTHER" id="PTHR42823:SF3">
    <property type="entry name" value="ATP SYNTHASE SUBUNIT A, CHLOROPLASTIC"/>
    <property type="match status" value="1"/>
</dbReference>
<dbReference type="Pfam" id="PF00119">
    <property type="entry name" value="ATP-synt_A"/>
    <property type="match status" value="1"/>
</dbReference>
<dbReference type="PRINTS" id="PR00123">
    <property type="entry name" value="ATPASEA"/>
</dbReference>
<dbReference type="SUPFAM" id="SSF81336">
    <property type="entry name" value="F1F0 ATP synthase subunit A"/>
    <property type="match status" value="1"/>
</dbReference>
<dbReference type="PROSITE" id="PS00449">
    <property type="entry name" value="ATPASE_A"/>
    <property type="match status" value="1"/>
</dbReference>
<feature type="chain" id="PRO_1000145303" description="ATP synthase subunit a">
    <location>
        <begin position="1"/>
        <end position="264"/>
    </location>
</feature>
<feature type="transmembrane region" description="Helical" evidence="1">
    <location>
        <begin position="32"/>
        <end position="52"/>
    </location>
</feature>
<feature type="transmembrane region" description="Helical" evidence="1">
    <location>
        <begin position="89"/>
        <end position="109"/>
    </location>
</feature>
<feature type="transmembrane region" description="Helical" evidence="1">
    <location>
        <begin position="134"/>
        <end position="154"/>
    </location>
</feature>
<feature type="transmembrane region" description="Helical" evidence="1">
    <location>
        <begin position="177"/>
        <end position="197"/>
    </location>
</feature>
<feature type="transmembrane region" description="Helical" evidence="1">
    <location>
        <begin position="208"/>
        <end position="228"/>
    </location>
</feature>
<feature type="transmembrane region" description="Helical" evidence="1">
    <location>
        <begin position="235"/>
        <end position="255"/>
    </location>
</feature>
<comment type="function">
    <text evidence="1">Key component of the proton channel; it plays a direct role in the translocation of protons across the membrane.</text>
</comment>
<comment type="subunit">
    <text evidence="1">F-type ATPases have 2 components, CF(1) - the catalytic core - and CF(0) - the membrane proton channel. CF(1) has five subunits: alpha(3), beta(3), gamma(1), delta(1), epsilon(1). CF(0) has three main subunits: a(1), b(2) and c(9-12). The alpha and beta chains form an alternating ring which encloses part of the gamma chain. CF(1) is attached to CF(0) by a central stalk formed by the gamma and epsilon chains, while a peripheral stalk is formed by the delta and b chains.</text>
</comment>
<comment type="subcellular location">
    <subcellularLocation>
        <location evidence="1">Cell inner membrane</location>
        <topology evidence="1">Multi-pass membrane protein</topology>
    </subcellularLocation>
</comment>
<comment type="similarity">
    <text evidence="1">Belongs to the ATPase A chain family.</text>
</comment>
<organism>
    <name type="scientific">Shewanella piezotolerans (strain WP3 / JCM 13877)</name>
    <dbReference type="NCBI Taxonomy" id="225849"/>
    <lineage>
        <taxon>Bacteria</taxon>
        <taxon>Pseudomonadati</taxon>
        <taxon>Pseudomonadota</taxon>
        <taxon>Gammaproteobacteria</taxon>
        <taxon>Alteromonadales</taxon>
        <taxon>Shewanellaceae</taxon>
        <taxon>Shewanella</taxon>
    </lineage>
</organism>
<sequence length="264" mass="29611">MAATGEALTPQGYIQHHLTNLSVGEGFWTWHIDSLFFSVGLGVLFLWLFHSVGKKATTGVPGKLQCFVEMIVEFVDNSVKETFHGRNPVIAPLALTIFVWVFMMNFMDMVPVDWIPELAMAAGIPYMKVVPTTDLNITFSMAIGVFLLIIYYSIKVKGVSGFVKELTMQPFNHWAMIPVNFLLETVTLIAKPISLALRLFGNLYAGELIFILIALMYGANWALSTLGVTLQLGWLIFHILVITLQAFIFMMLTIVYLSMAHEDH</sequence>
<protein>
    <recommendedName>
        <fullName evidence="1">ATP synthase subunit a</fullName>
    </recommendedName>
    <alternativeName>
        <fullName evidence="1">ATP synthase F0 sector subunit a</fullName>
    </alternativeName>
    <alternativeName>
        <fullName evidence="1">F-ATPase subunit 6</fullName>
    </alternativeName>
</protein>
<proteinExistence type="inferred from homology"/>